<dbReference type="EC" id="2.6.1.-" evidence="2"/>
<dbReference type="EMBL" id="KY764301">
    <property type="protein sequence ID" value="ARF05986.1"/>
    <property type="molecule type" value="Genomic_DNA"/>
</dbReference>
<dbReference type="SMR" id="A0A1W5T1Y5"/>
<dbReference type="GO" id="GO:0004084">
    <property type="term" value="F:branched-chain-amino-acid transaminase activity"/>
    <property type="evidence" value="ECO:0007669"/>
    <property type="project" value="InterPro"/>
</dbReference>
<dbReference type="GO" id="GO:0009081">
    <property type="term" value="P:branched-chain amino acid metabolic process"/>
    <property type="evidence" value="ECO:0007669"/>
    <property type="project" value="InterPro"/>
</dbReference>
<dbReference type="CDD" id="cd01557">
    <property type="entry name" value="BCAT_beta_family"/>
    <property type="match status" value="1"/>
</dbReference>
<dbReference type="FunFam" id="3.30.470.10:FF:000004">
    <property type="entry name" value="Branched-chain-amino-acid aminotransferase"/>
    <property type="match status" value="1"/>
</dbReference>
<dbReference type="Gene3D" id="3.30.470.10">
    <property type="match status" value="1"/>
</dbReference>
<dbReference type="Gene3D" id="3.20.10.10">
    <property type="entry name" value="D-amino Acid Aminotransferase, subunit A, domain 2"/>
    <property type="match status" value="1"/>
</dbReference>
<dbReference type="InterPro" id="IPR001544">
    <property type="entry name" value="Aminotrans_IV"/>
</dbReference>
<dbReference type="InterPro" id="IPR036038">
    <property type="entry name" value="Aminotransferase-like"/>
</dbReference>
<dbReference type="InterPro" id="IPR005786">
    <property type="entry name" value="B_amino_transII"/>
</dbReference>
<dbReference type="InterPro" id="IPR043132">
    <property type="entry name" value="BCAT-like_C"/>
</dbReference>
<dbReference type="InterPro" id="IPR043131">
    <property type="entry name" value="BCAT-like_N"/>
</dbReference>
<dbReference type="InterPro" id="IPR033939">
    <property type="entry name" value="BCAT_family"/>
</dbReference>
<dbReference type="PANTHER" id="PTHR42825">
    <property type="entry name" value="AMINO ACID AMINOTRANSFERASE"/>
    <property type="match status" value="1"/>
</dbReference>
<dbReference type="PANTHER" id="PTHR42825:SF2">
    <property type="entry name" value="BRANCHED-CHAIN-AMINO-ACID AMINOTRANSFERASE 3, CHLOROPLASTIC-RELATED"/>
    <property type="match status" value="1"/>
</dbReference>
<dbReference type="Pfam" id="PF01063">
    <property type="entry name" value="Aminotran_4"/>
    <property type="match status" value="1"/>
</dbReference>
<dbReference type="PIRSF" id="PIRSF006468">
    <property type="entry name" value="BCAT1"/>
    <property type="match status" value="1"/>
</dbReference>
<dbReference type="SUPFAM" id="SSF56752">
    <property type="entry name" value="D-aminoacid aminotransferase-like PLP-dependent enzymes"/>
    <property type="match status" value="1"/>
</dbReference>
<sequence>MAPKDFFPPAPLDLDWDNIGIKVREVNGHVECAYNVATESWSEPQVVKGIDLTISGLSPALNYGQQAYEGMKAFRDPQGQIHIFRPEVHAARMAHSCEVVSIPPIPQAQFIRSVALAVSVNAEFVPPFDSSAALYIRPLAFGSGPQINLAQPEEYTFCVFVLPVTSLLGTKPVDALIMEEFDRTAPMGSGNAKVGGNYAPVLRWAAKARARGYGIPLHLDSKTRTEIDEFSAAGFIGVRDDDGKTTIVVPDSSCIIQSVTSDSCVQLARSYGWSVEVRPIKYTELPEFSEVLAVGTAAVIVPIGSITRDSLRDLIVYKPSEDGGYPCADKLFKSIKDIQRGLGKDVFNWCVPVHEPGAYFQPVSA</sequence>
<name>POXL_PENOX</name>
<feature type="chain" id="PRO_0000453759" description="Aminotransferase poxL">
    <location>
        <begin position="1"/>
        <end position="365"/>
    </location>
</feature>
<feature type="binding site" evidence="1">
    <location>
        <position position="92"/>
    </location>
    <ligand>
        <name>pyridoxal 5'-phosphate</name>
        <dbReference type="ChEBI" id="CHEBI:597326"/>
    </ligand>
</feature>
<feature type="binding site" evidence="1">
    <location>
        <position position="229"/>
    </location>
    <ligand>
        <name>pyridoxal 5'-phosphate</name>
        <dbReference type="ChEBI" id="CHEBI:597326"/>
    </ligand>
</feature>
<feature type="modified residue" description="N6-(pyridoxal phosphate)lysine" evidence="1">
    <location>
        <position position="193"/>
    </location>
</feature>
<evidence type="ECO:0000250" key="1">
    <source>
        <dbReference type="UniProtKB" id="P19938"/>
    </source>
</evidence>
<evidence type="ECO:0000269" key="2">
    <source>
    </source>
</evidence>
<evidence type="ECO:0000303" key="3">
    <source>
    </source>
</evidence>
<evidence type="ECO:0000305" key="4"/>
<evidence type="ECO:0000305" key="5">
    <source>
    </source>
</evidence>
<keyword id="KW-0032">Aminotransferase</keyword>
<keyword id="KW-0663">Pyridoxal phosphate</keyword>
<keyword id="KW-0808">Transferase</keyword>
<accession>A0A1W5T1Y5</accession>
<proteinExistence type="evidence at protein level"/>
<protein>
    <recommendedName>
        <fullName evidence="3">Aminotransferase poxL</fullName>
        <ecNumber evidence="2">2.6.1.-</ecNumber>
    </recommendedName>
    <alternativeName>
        <fullName evidence="3">Oxaleimides biosynthesis cluster protein L</fullName>
    </alternativeName>
</protein>
<gene>
    <name evidence="3" type="primary">poxL</name>
</gene>
<organism>
    <name type="scientific">Penicillium oxalicum</name>
    <dbReference type="NCBI Taxonomy" id="69781"/>
    <lineage>
        <taxon>Eukaryota</taxon>
        <taxon>Fungi</taxon>
        <taxon>Dikarya</taxon>
        <taxon>Ascomycota</taxon>
        <taxon>Pezizomycotina</taxon>
        <taxon>Eurotiomycetes</taxon>
        <taxon>Eurotiomycetidae</taxon>
        <taxon>Eurotiales</taxon>
        <taxon>Aspergillaceae</taxon>
        <taxon>Penicillium</taxon>
    </lineage>
</organism>
<comment type="function">
    <text evidence="2 5">Aminotransferase; part of the gene cluster that mediates the biosynthesis of oxaleimides, cytotoxic compounds containing an unusual disubstituted succinimide moiety (PubMed:28365998). The first step of the pathway is provided by the HR-PKS poxF that serves in a new mode of collaborative biosynthesis with the PKS-NRPS poxE, by providing the olefin containing amino acid substrate via the synthesis of an ACP-bound dec-4-enoate (PubMed:28365998). The cytochrome P450 monooxygenase poxM-catalyzed oxidation at the alpha-position creates the enzyme-bound 2-hydroxydec-4-enoyl-ACP thioester, which may be prone to spontaneous hydrolysis to yield 2-hydroxydec-4-enoic acid due to increased electrophilicity of the carbonyl (PubMed:28365998). 2-hydroxydec-4-enoic acid can then be further oxidized by poxM to yield the alpha-ketoacid 2-oxodec-4-enoicacid, which is reductively aminated by the aminotransferase poxL to yield (S,E)-2-aminodec-4-enoic acid (PubMed:28365998). The Hybrid PKS-NRPS synthetase poxE then performs condensation between the octaketide product of its PKS modules and the amino group of (S,E)-2-aminodec-4-enoic acid which is activated and incorporated by the adenylation domain (PubMed:28365998). The resulting aminoacyl product can be cyclized by the Diels-Alderase PoxQ and reductively released by the reductive (R) domain of poxE to yield an aldehyde intermediate (Probable) (PubMed:28365998). The released aldehyde is then substrate for a Knoevenagel condensation by the hydrolyase poxO followed by an oxidation at the 5-position of the pyrrolidone ring (PubMed:28365998). The presence of the olefin from the amino acid building block allows for migration of the substituted allyl group to occur (PubMed:28365998). This allylic transposition reaction takes place in a conjugate addition, semipinacol-like fashion to yield a succinimide intermediate (PubMed:28365998). Iterative two-electron oxidations of the C7 methyl of the succinimide intermediate to the carboxylic acid can be catalyzed by one of two remaining cytochrome P450 monooxygenasess poxC or poxD to yield oxaleimide A (PubMed:28365998). Subsequent oxidation yields the maleimide scaffold oxaleimide I (PubMed:28365998). Both oxaleimide A and oxaleimide I can undergo oxidative modifications in the decalin ring to yield the series of products oxaleimides B to H (PubMed:28365998).</text>
</comment>
<comment type="cofactor">
    <cofactor evidence="1">
        <name>pyridoxal 5'-phosphate</name>
        <dbReference type="ChEBI" id="CHEBI:597326"/>
    </cofactor>
</comment>
<comment type="pathway">
    <text evidence="2">Secondary metabolite biosynthesis.</text>
</comment>
<comment type="induction">
    <text evidence="2">Expression is positively regulated by the oxaleimides biosynthesis cluster-specific transcription factor poxB.</text>
</comment>
<comment type="similarity">
    <text evidence="4">Belongs to the class-IV pyridoxal-phosphate-dependent aminotransferase family.</text>
</comment>
<reference key="1">
    <citation type="journal article" date="2017" name="J. Am. Chem. Soc.">
        <title>Collaborative Biosynthesis of Maleimide- and Succinimide-Containing Natural Products by Fungal Polyketide Megasynthases.</title>
        <authorList>
            <person name="Sato M."/>
            <person name="Dander J.E."/>
            <person name="Sato C."/>
            <person name="Hung Y.S."/>
            <person name="Gao S.S."/>
            <person name="Tang M.C."/>
            <person name="Hang L."/>
            <person name="Winter J.M."/>
            <person name="Garg N.K."/>
            <person name="Watanabe K."/>
            <person name="Tang Y."/>
        </authorList>
    </citation>
    <scope>NUCLEOTIDE SEQUENCE [GENOMIC DNA]</scope>
    <scope>FUNCTION</scope>
    <scope>CATALYTIC ACTIVITY</scope>
    <scope>INDUCTION</scope>
    <scope>PATHWAY</scope>
    <source>
        <strain>K85</strain>
    </source>
</reference>
<reference key="2">
    <citation type="journal article" date="2020" name="Chem. Commun. (Camb.)">
        <title>Evidence for enzyme catalysed intramolecular [4+2] Diels-Alder cyclization during the biosynthesis of pyrichalasin H.</title>
        <authorList>
            <person name="Hantke V."/>
            <person name="Skellam E.J."/>
            <person name="Cox R.J."/>
        </authorList>
    </citation>
    <scope>FUNCTION</scope>
</reference>